<accession>P38309</accession>
<organism>
    <name type="scientific">Saccharomyces cerevisiae (strain ATCC 204508 / S288c)</name>
    <name type="common">Baker's yeast</name>
    <dbReference type="NCBI Taxonomy" id="559292"/>
    <lineage>
        <taxon>Eukaryota</taxon>
        <taxon>Fungi</taxon>
        <taxon>Dikarya</taxon>
        <taxon>Ascomycota</taxon>
        <taxon>Saccharomycotina</taxon>
        <taxon>Saccharomycetes</taxon>
        <taxon>Saccharomycetales</taxon>
        <taxon>Saccharomycetaceae</taxon>
        <taxon>Saccharomyces</taxon>
    </lineage>
</organism>
<gene>
    <name type="ordered locus">YBR206W</name>
    <name type="ORF">YBR1447</name>
</gene>
<evidence type="ECO:0000305" key="1"/>
<evidence type="ECO:0000305" key="2">
    <source>
    </source>
</evidence>
<comment type="miscellaneous">
    <text evidence="1">Partially overlaps KTR3.</text>
</comment>
<comment type="caution">
    <text evidence="2">Product of a dubious gene prediction unlikely to encode a functional protein. Because of that it is not part of the S.cerevisiae S288c complete/reference proteome set.</text>
</comment>
<sequence length="107" mass="11838">MRQCTPSLPLCSWTSQKSISLTVLDSIIQISPLVLSNRRLDYKTSVSANLARTSPGLLTTSVLESTFQQEITSFHQEFKNQTTNSACSVKTGAKTSTCIYLYTHNSM</sequence>
<name>YB56_YEAST</name>
<reference key="1">
    <citation type="journal article" date="1993" name="Yeast">
        <title>A 12.8 kb segment, on the right arm of chromosome II from Saccharomyces cerevisiae including part of the DUR1,2 gene, contains five putative new genes.</title>
        <authorList>
            <person name="Bussereau F."/>
            <person name="Mallet L."/>
            <person name="Gaillon L."/>
            <person name="Jacquet M."/>
        </authorList>
    </citation>
    <scope>NUCLEOTIDE SEQUENCE [GENOMIC DNA]</scope>
    <source>
        <strain>ATCC 204508 / S288c</strain>
    </source>
</reference>
<reference key="2">
    <citation type="journal article" date="1994" name="EMBO J.">
        <title>Complete DNA sequence of yeast chromosome II.</title>
        <authorList>
            <person name="Feldmann H."/>
            <person name="Aigle M."/>
            <person name="Aljinovic G."/>
            <person name="Andre B."/>
            <person name="Baclet M.C."/>
            <person name="Barthe C."/>
            <person name="Baur A."/>
            <person name="Becam A.-M."/>
            <person name="Biteau N."/>
            <person name="Boles E."/>
            <person name="Brandt T."/>
            <person name="Brendel M."/>
            <person name="Brueckner M."/>
            <person name="Bussereau F."/>
            <person name="Christiansen C."/>
            <person name="Contreras R."/>
            <person name="Crouzet M."/>
            <person name="Cziepluch C."/>
            <person name="Demolis N."/>
            <person name="Delaveau T."/>
            <person name="Doignon F."/>
            <person name="Domdey H."/>
            <person name="Duesterhus S."/>
            <person name="Dubois E."/>
            <person name="Dujon B."/>
            <person name="El Bakkoury M."/>
            <person name="Entian K.-D."/>
            <person name="Feuermann M."/>
            <person name="Fiers W."/>
            <person name="Fobo G.M."/>
            <person name="Fritz C."/>
            <person name="Gassenhuber J."/>
            <person name="Glansdorff N."/>
            <person name="Goffeau A."/>
            <person name="Grivell L.A."/>
            <person name="de Haan M."/>
            <person name="Hein C."/>
            <person name="Herbert C.J."/>
            <person name="Hollenberg C.P."/>
            <person name="Holmstroem K."/>
            <person name="Jacq C."/>
            <person name="Jacquet M."/>
            <person name="Jauniaux J.-C."/>
            <person name="Jonniaux J.-L."/>
            <person name="Kallesoee T."/>
            <person name="Kiesau P."/>
            <person name="Kirchrath L."/>
            <person name="Koetter P."/>
            <person name="Korol S."/>
            <person name="Liebl S."/>
            <person name="Logghe M."/>
            <person name="Lohan A.J.E."/>
            <person name="Louis E.J."/>
            <person name="Li Z.Y."/>
            <person name="Maat M.J."/>
            <person name="Mallet L."/>
            <person name="Mannhaupt G."/>
            <person name="Messenguy F."/>
            <person name="Miosga T."/>
            <person name="Molemans F."/>
            <person name="Mueller S."/>
            <person name="Nasr F."/>
            <person name="Obermaier B."/>
            <person name="Perea J."/>
            <person name="Pierard A."/>
            <person name="Piravandi E."/>
            <person name="Pohl F.M."/>
            <person name="Pohl T.M."/>
            <person name="Potier S."/>
            <person name="Proft M."/>
            <person name="Purnelle B."/>
            <person name="Ramezani Rad M."/>
            <person name="Rieger M."/>
            <person name="Rose M."/>
            <person name="Schaaff-Gerstenschlaeger I."/>
            <person name="Scherens B."/>
            <person name="Schwarzlose C."/>
            <person name="Skala J."/>
            <person name="Slonimski P.P."/>
            <person name="Smits P.H.M."/>
            <person name="Souciet J.-L."/>
            <person name="Steensma H.Y."/>
            <person name="Stucka R."/>
            <person name="Urrestarazu L.A."/>
            <person name="van der Aart Q.J.M."/>
            <person name="Van Dyck L."/>
            <person name="Vassarotti A."/>
            <person name="Vetter I."/>
            <person name="Vierendeels F."/>
            <person name="Vissers S."/>
            <person name="Wagner G."/>
            <person name="de Wergifosse P."/>
            <person name="Wolfe K.H."/>
            <person name="Zagulski M."/>
            <person name="Zimmermann F.K."/>
            <person name="Mewes H.-W."/>
            <person name="Kleine K."/>
        </authorList>
    </citation>
    <scope>NUCLEOTIDE SEQUENCE [LARGE SCALE GENOMIC DNA]</scope>
    <source>
        <strain>ATCC 204508 / S288c</strain>
    </source>
</reference>
<reference key="3">
    <citation type="journal article" date="2014" name="G3 (Bethesda)">
        <title>The reference genome sequence of Saccharomyces cerevisiae: Then and now.</title>
        <authorList>
            <person name="Engel S.R."/>
            <person name="Dietrich F.S."/>
            <person name="Fisk D.G."/>
            <person name="Binkley G."/>
            <person name="Balakrishnan R."/>
            <person name="Costanzo M.C."/>
            <person name="Dwight S.S."/>
            <person name="Hitz B.C."/>
            <person name="Karra K."/>
            <person name="Nash R.S."/>
            <person name="Weng S."/>
            <person name="Wong E.D."/>
            <person name="Lloyd P."/>
            <person name="Skrzypek M.S."/>
            <person name="Miyasato S.R."/>
            <person name="Simison M."/>
            <person name="Cherry J.M."/>
        </authorList>
    </citation>
    <scope>GENOME REANNOTATION</scope>
    <source>
        <strain>ATCC 204508 / S288c</strain>
    </source>
</reference>
<reference key="4">
    <citation type="journal article" date="2007" name="Genome Res.">
        <title>Approaching a complete repository of sequence-verified protein-encoding clones for Saccharomyces cerevisiae.</title>
        <authorList>
            <person name="Hu Y."/>
            <person name="Rolfs A."/>
            <person name="Bhullar B."/>
            <person name="Murthy T.V.S."/>
            <person name="Zhu C."/>
            <person name="Berger M.F."/>
            <person name="Camargo A.A."/>
            <person name="Kelley F."/>
            <person name="McCarron S."/>
            <person name="Jepson D."/>
            <person name="Richardson A."/>
            <person name="Raphael J."/>
            <person name="Moreira D."/>
            <person name="Taycher E."/>
            <person name="Zuo D."/>
            <person name="Mohr S."/>
            <person name="Kane M.F."/>
            <person name="Williamson J."/>
            <person name="Simpson A.J.G."/>
            <person name="Bulyk M.L."/>
            <person name="Harlow E."/>
            <person name="Marsischky G."/>
            <person name="Kolodner R.D."/>
            <person name="LaBaer J."/>
        </authorList>
    </citation>
    <scope>NUCLEOTIDE SEQUENCE [GENOMIC DNA]</scope>
    <source>
        <strain>ATCC 204508 / S288c</strain>
    </source>
</reference>
<feature type="chain" id="PRO_0000202510" description="Putative uncharacterized protein YBR206W">
    <location>
        <begin position="1"/>
        <end position="107"/>
    </location>
</feature>
<protein>
    <recommendedName>
        <fullName>Putative uncharacterized protein YBR206W</fullName>
    </recommendedName>
</protein>
<proteinExistence type="uncertain"/>
<dbReference type="EMBL" id="Z21487">
    <property type="status" value="NOT_ANNOTATED_CDS"/>
    <property type="molecule type" value="Genomic_DNA"/>
</dbReference>
<dbReference type="EMBL" id="Z36074">
    <property type="protein sequence ID" value="CAA85170.1"/>
    <property type="molecule type" value="Genomic_DNA"/>
</dbReference>
<dbReference type="EMBL" id="AY693301">
    <property type="protein sequence ID" value="AAT93320.1"/>
    <property type="molecule type" value="Genomic_DNA"/>
</dbReference>
<dbReference type="PIR" id="S46078">
    <property type="entry name" value="S46078"/>
</dbReference>
<dbReference type="IntAct" id="P38309">
    <property type="interactions" value="1"/>
</dbReference>
<dbReference type="PaxDb" id="4932-YBR206W"/>
<dbReference type="EnsemblFungi" id="YBR206W_mRNA">
    <property type="protein sequence ID" value="YBR206W"/>
    <property type="gene ID" value="YBR206W"/>
</dbReference>
<dbReference type="AGR" id="SGD:S000000410"/>
<dbReference type="SGD" id="S000000410">
    <property type="gene designation" value="YBR206W"/>
</dbReference>
<dbReference type="HOGENOM" id="CLU_2212012_0_0_1"/>